<proteinExistence type="evidence at protein level"/>
<organism>
    <name type="scientific">Schistocerca gregaria</name>
    <name type="common">Desert locust</name>
    <name type="synonym">Gryllus gregarius</name>
    <dbReference type="NCBI Taxonomy" id="7010"/>
    <lineage>
        <taxon>Eukaryota</taxon>
        <taxon>Metazoa</taxon>
        <taxon>Ecdysozoa</taxon>
        <taxon>Arthropoda</taxon>
        <taxon>Hexapoda</taxon>
        <taxon>Insecta</taxon>
        <taxon>Pterygota</taxon>
        <taxon>Neoptera</taxon>
        <taxon>Polyneoptera</taxon>
        <taxon>Orthoptera</taxon>
        <taxon>Caelifera</taxon>
        <taxon>Acrididea</taxon>
        <taxon>Acridomorpha</taxon>
        <taxon>Acridoidea</taxon>
        <taxon>Acrididae</taxon>
        <taxon>Cyrtacanthacridinae</taxon>
        <taxon>Schistocerca</taxon>
    </lineage>
</organism>
<evidence type="ECO:0000255" key="1"/>
<evidence type="ECO:0000255" key="2">
    <source>
        <dbReference type="PROSITE-ProRule" id="PRU00776"/>
    </source>
</evidence>
<evidence type="ECO:0000269" key="3">
    <source>
    </source>
</evidence>
<protein>
    <recommendedName>
        <fullName>Serine protease inhibitor 3</fullName>
    </recommendedName>
    <alternativeName>
        <fullName>Protease inhibitor SGPI-3</fullName>
    </alternativeName>
    <alternativeName>
        <fullName>Serine protease inhibitor III</fullName>
    </alternativeName>
</protein>
<sequence>MAKLLAVFLVLLIAALVCEQALACTPGSRKYDGCNWCTCSSGGAWICTLKYCPPSSGGGLTFA</sequence>
<keyword id="KW-0903">Direct protein sequencing</keyword>
<keyword id="KW-1015">Disulfide bond</keyword>
<keyword id="KW-0646">Protease inhibitor</keyword>
<keyword id="KW-0677">Repeat</keyword>
<keyword id="KW-0964">Secreted</keyword>
<keyword id="KW-0722">Serine protease inhibitor</keyword>
<keyword id="KW-0732">Signal</keyword>
<name>SGP3_SCHGR</name>
<feature type="signal peptide" evidence="1">
    <location>
        <begin position="1"/>
        <end position="23"/>
    </location>
</feature>
<feature type="peptide" id="PRO_0000026712" description="Serine protease inhibitor 3">
    <location>
        <begin position="24"/>
        <end position="63"/>
    </location>
</feature>
<feature type="domain" description="Pacifastin" evidence="2">
    <location>
        <begin position="24"/>
        <end position="55"/>
    </location>
</feature>
<feature type="site" description="Reactive bond">
    <location>
        <begin position="49"/>
        <end position="50"/>
    </location>
</feature>
<feature type="disulfide bond" evidence="2">
    <location>
        <begin position="24"/>
        <end position="39"/>
    </location>
</feature>
<feature type="disulfide bond" evidence="2">
    <location>
        <begin position="34"/>
        <end position="52"/>
    </location>
</feature>
<feature type="disulfide bond" evidence="2">
    <location>
        <begin position="37"/>
        <end position="47"/>
    </location>
</feature>
<accession>O46163</accession>
<comment type="function">
    <text evidence="3">In vitro, active against alpha-chymotrypsin.</text>
</comment>
<comment type="subcellular location">
    <subcellularLocation>
        <location>Secreted</location>
    </subcellularLocation>
</comment>
<comment type="tissue specificity">
    <text evidence="3">Expressed in hemolymph, ovaries, testes and fat body of adults but are absent in the gut. Also present in larval hemolymph and fat body.</text>
</comment>
<comment type="similarity">
    <text evidence="2">Belongs to the protease inhibitor I19 family.</text>
</comment>
<dbReference type="EMBL" id="Y09606">
    <property type="protein sequence ID" value="CAA70819.1"/>
    <property type="molecule type" value="mRNA"/>
</dbReference>
<dbReference type="MEROPS" id="I19.012"/>
<dbReference type="OrthoDB" id="10026631at2759"/>
<dbReference type="GO" id="GO:0005576">
    <property type="term" value="C:extracellular region"/>
    <property type="evidence" value="ECO:0007669"/>
    <property type="project" value="UniProtKB-SubCell"/>
</dbReference>
<dbReference type="GO" id="GO:0004867">
    <property type="term" value="F:serine-type endopeptidase inhibitor activity"/>
    <property type="evidence" value="ECO:0007669"/>
    <property type="project" value="UniProtKB-KW"/>
</dbReference>
<dbReference type="InterPro" id="IPR008037">
    <property type="entry name" value="Pacifastin_dom"/>
</dbReference>
<dbReference type="InterPro" id="IPR036201">
    <property type="entry name" value="Pacifastin_dom_sf"/>
</dbReference>
<dbReference type="Pfam" id="PF05375">
    <property type="entry name" value="Pacifastin_I"/>
    <property type="match status" value="1"/>
</dbReference>
<dbReference type="SUPFAM" id="SSF57283">
    <property type="entry name" value="PMP inhibitors"/>
    <property type="match status" value="1"/>
</dbReference>
<dbReference type="PROSITE" id="PS51446">
    <property type="entry name" value="PACIFASTIN"/>
    <property type="match status" value="1"/>
</dbReference>
<reference key="1">
    <citation type="journal article" date="1998" name="Eur. J. Biochem.">
        <title>Cloning of two cDNAs encoding three small serine protease inhibiting peptides from the desert locust Schistocerca gregaria and analysis of tissue-dependent and stage-dependent expression.</title>
        <authorList>
            <person name="Vanden Broeck J."/>
            <person name="Chiou S.-J."/>
            <person name="Schoofs L."/>
            <person name="Hamdaoui A."/>
            <person name="Vandenbussche F."/>
            <person name="Simonet G."/>
            <person name="Wataleb S."/>
            <person name="De Loof A."/>
        </authorList>
    </citation>
    <scope>NUCLEOTIDE SEQUENCE [MRNA]</scope>
    <source>
        <tissue>Ovary</tissue>
    </source>
</reference>
<reference key="2">
    <citation type="journal article" date="1998" name="FEBS Lett.">
        <title>Purification and characterization of a group of five novel peptide serine protease inhibitors from ovaries of the desert locust, Schistocerca gregaria.</title>
        <authorList>
            <person name="Hamdaoui A."/>
            <person name="Wataleb S."/>
            <person name="Devreese B."/>
            <person name="Chiou S.-J."/>
            <person name="Vanden Broeck J."/>
            <person name="Van Beeumen J."/>
            <person name="De Loof A."/>
            <person name="Schoofs L."/>
        </authorList>
    </citation>
    <scope>PROTEIN SEQUENCE OF 24-63</scope>
    <scope>FUNCTION</scope>
    <scope>TISSUE SPECIFICITY</scope>
    <source>
        <tissue>Ovary</tissue>
    </source>
</reference>